<organism>
    <name type="scientific">Rickettsia prowazekii (strain Madrid E)</name>
    <dbReference type="NCBI Taxonomy" id="272947"/>
    <lineage>
        <taxon>Bacteria</taxon>
        <taxon>Pseudomonadati</taxon>
        <taxon>Pseudomonadota</taxon>
        <taxon>Alphaproteobacteria</taxon>
        <taxon>Rickettsiales</taxon>
        <taxon>Rickettsiaceae</taxon>
        <taxon>Rickettsieae</taxon>
        <taxon>Rickettsia</taxon>
        <taxon>typhus group</taxon>
    </lineage>
</organism>
<protein>
    <recommendedName>
        <fullName>Uncharacterized protein RP165</fullName>
    </recommendedName>
</protein>
<feature type="chain" id="PRO_0000101324" description="Uncharacterized protein RP165">
    <location>
        <begin position="1"/>
        <end position="368"/>
    </location>
</feature>
<reference key="1">
    <citation type="journal article" date="1998" name="Nature">
        <title>The genome sequence of Rickettsia prowazekii and the origin of mitochondria.</title>
        <authorList>
            <person name="Andersson S.G.E."/>
            <person name="Zomorodipour A."/>
            <person name="Andersson J.O."/>
            <person name="Sicheritz-Ponten T."/>
            <person name="Alsmark U.C.M."/>
            <person name="Podowski R.M."/>
            <person name="Naeslund A.K."/>
            <person name="Eriksson A.-S."/>
            <person name="Winkler H.H."/>
            <person name="Kurland C.G."/>
        </authorList>
    </citation>
    <scope>NUCLEOTIDE SEQUENCE [LARGE SCALE GENOMIC DNA]</scope>
    <source>
        <strain>Madrid E</strain>
    </source>
</reference>
<sequence>MEQFEFVNKTEIPTHAINNTAFAHLGVNLAYKTDDTSRYLAAALMTDGNHLVGSGFEILAASCDSLNTALYGYKAVAFINKETKTIHIASAGTKADINDIWDDALITFHYAPNKLKIAQKFVDNIISKIGGIDEAREYTFDTSGHSLGAIIADLTGIELHSRNLNFNKSVTFDSPGSQEVIKYAINQDLFTGKVITPIEELAKHSEVYNAKPNIINTTNQHVGQINLVLPKINNEKSKSSEAVGWFKYLYNISGSAVYKVAEYLNFNKMFEGINNHKLKYFADLQDSAVIPIANWEEQILENNAYTQKLKTIPSTGNDVYLLDTNRITDNEYTSIIGIDVFHWAYNDLQQSCAMETVEQIGNLIPILC</sequence>
<name>Y165_RICPR</name>
<dbReference type="EMBL" id="AJ235270">
    <property type="protein sequence ID" value="CAA14632.1"/>
    <property type="molecule type" value="Genomic_DNA"/>
</dbReference>
<dbReference type="PIR" id="A71727">
    <property type="entry name" value="A71727"/>
</dbReference>
<dbReference type="RefSeq" id="NP_220555.1">
    <property type="nucleotide sequence ID" value="NC_000963.1"/>
</dbReference>
<dbReference type="RefSeq" id="WP_004598629.1">
    <property type="nucleotide sequence ID" value="NC_000963.1"/>
</dbReference>
<dbReference type="SMR" id="Q9ZDZ8"/>
<dbReference type="STRING" id="272947.gene:17555248"/>
<dbReference type="ESTHER" id="ricpr-y165">
    <property type="family name" value="Mbeg1-like"/>
</dbReference>
<dbReference type="EnsemblBacteria" id="CAA14632">
    <property type="protein sequence ID" value="CAA14632"/>
    <property type="gene ID" value="CAA14632"/>
</dbReference>
<dbReference type="KEGG" id="rpr:RP165"/>
<dbReference type="PATRIC" id="fig|272947.5.peg.170"/>
<dbReference type="eggNOG" id="ENOG502Z8H8">
    <property type="taxonomic scope" value="Bacteria"/>
</dbReference>
<dbReference type="HOGENOM" id="CLU_064079_0_0_5"/>
<dbReference type="OrthoDB" id="7160732at2"/>
<dbReference type="Proteomes" id="UP000002480">
    <property type="component" value="Chromosome"/>
</dbReference>
<dbReference type="Gene3D" id="3.40.50.1820">
    <property type="entry name" value="alpha/beta hydrolase"/>
    <property type="match status" value="1"/>
</dbReference>
<dbReference type="InterPro" id="IPR029058">
    <property type="entry name" value="AB_hydrolase_fold"/>
</dbReference>
<dbReference type="SUPFAM" id="SSF53474">
    <property type="entry name" value="alpha/beta-Hydrolases"/>
    <property type="match status" value="1"/>
</dbReference>
<gene>
    <name type="ordered locus">RP165</name>
</gene>
<keyword id="KW-1185">Reference proteome</keyword>
<accession>Q9ZDZ8</accession>
<proteinExistence type="predicted"/>